<evidence type="ECO:0000255" key="1"/>
<evidence type="ECO:0000255" key="2">
    <source>
        <dbReference type="PROSITE-ProRule" id="PRU00283"/>
    </source>
</evidence>
<evidence type="ECO:0000256" key="3">
    <source>
        <dbReference type="SAM" id="MobiDB-lite"/>
    </source>
</evidence>
<evidence type="ECO:0000269" key="4">
    <source>
    </source>
</evidence>
<evidence type="ECO:0000269" key="5">
    <source>
    </source>
</evidence>
<evidence type="ECO:0000269" key="6">
    <source>
    </source>
</evidence>
<evidence type="ECO:0000269" key="7">
    <source>
    </source>
</evidence>
<evidence type="ECO:0000269" key="8">
    <source ref="6"/>
</evidence>
<evidence type="ECO:0000303" key="9">
    <source>
    </source>
</evidence>
<evidence type="ECO:0000303" key="10">
    <source>
    </source>
</evidence>
<evidence type="ECO:0000303" key="11">
    <source>
    </source>
</evidence>
<evidence type="ECO:0000305" key="12"/>
<evidence type="ECO:0000305" key="13">
    <source>
    </source>
</evidence>
<evidence type="ECO:0000305" key="14">
    <source>
    </source>
</evidence>
<evidence type="ECO:0000312" key="15">
    <source>
        <dbReference type="Araport" id="AT5G47820"/>
    </source>
</evidence>
<evidence type="ECO:0000312" key="16">
    <source>
        <dbReference type="EMBL" id="AAN86114.1"/>
    </source>
</evidence>
<evidence type="ECO:0000312" key="17">
    <source>
        <dbReference type="EMBL" id="BAB11329.1"/>
    </source>
</evidence>
<reference key="1">
    <citation type="journal article" date="2002" name="Plant Cell">
        <title>A kinesin-like protein is essential for oriented deposition of cellulose microfibrils and cell wall strength.</title>
        <authorList>
            <person name="Zhong R."/>
            <person name="Burk D.H."/>
            <person name="Morrison W.H."/>
            <person name="Ye Z.H."/>
        </authorList>
    </citation>
    <scope>NUCLEOTIDE SEQUENCE [GENOMIC DNA / MRNA]</scope>
    <scope>FUNCTION</scope>
    <scope>SUBCELLULAR LOCATION</scope>
    <scope>TISSUE SPECIFICITY</scope>
    <scope>DOMAIN</scope>
    <scope>DISRUPTION PHENOTYPE</scope>
</reference>
<reference key="2">
    <citation type="journal article" date="1998" name="DNA Res.">
        <title>Structural analysis of Arabidopsis thaliana chromosome 5. VIII. Sequence features of the regions of 1,081,958 bp covered by seventeen physically assigned P1 and TAC clones.</title>
        <authorList>
            <person name="Asamizu E."/>
            <person name="Sato S."/>
            <person name="Kaneko T."/>
            <person name="Nakamura Y."/>
            <person name="Kotani H."/>
            <person name="Miyajima N."/>
            <person name="Tabata S."/>
        </authorList>
    </citation>
    <scope>NUCLEOTIDE SEQUENCE [LARGE SCALE GENOMIC DNA]</scope>
    <source>
        <strain>cv. Columbia</strain>
    </source>
</reference>
<reference key="3">
    <citation type="journal article" date="2017" name="Plant J.">
        <title>Araport11: a complete reannotation of the Arabidopsis thaliana reference genome.</title>
        <authorList>
            <person name="Cheng C.Y."/>
            <person name="Krishnakumar V."/>
            <person name="Chan A.P."/>
            <person name="Thibaud-Nissen F."/>
            <person name="Schobel S."/>
            <person name="Town C.D."/>
        </authorList>
    </citation>
    <scope>GENOME REANNOTATION</scope>
    <source>
        <strain>cv. Columbia</strain>
    </source>
</reference>
<reference key="4">
    <citation type="journal article" date="2001" name="BMC Genomics">
        <title>Kinesins in the Arabidopsis genome: a comparative analysis among eukaryotes.</title>
        <authorList>
            <person name="Reddy A.S."/>
            <person name="Day I.S."/>
        </authorList>
    </citation>
    <scope>GENE FAMILY</scope>
</reference>
<reference key="5">
    <citation type="journal article" date="2006" name="BMC Genomics">
        <title>Comprehensive comparative analysis of kinesins in photosynthetic eukaryotes.</title>
        <authorList>
            <person name="Richardson D.N."/>
            <person name="Simmons M.P."/>
            <person name="Reddy A.S."/>
        </authorList>
    </citation>
    <scope>GENE FAMILY</scope>
    <scope>NOMENCLATURE</scope>
</reference>
<reference key="6">
    <citation type="journal article" date="2007" name="J. Integr. Plant Biol.">
        <title>Alteration in secondary wall deposition by overexpression of the Fragile Fiber1 kinesin-like protein in Arabidopsis.</title>
        <authorList>
            <person name="Zhou J."/>
            <person name="Qiu J."/>
            <person name="Ye Z.H."/>
        </authorList>
    </citation>
    <scope>TISSUE SPECIFICITY</scope>
    <scope>FUNCTION</scope>
</reference>
<reference key="7">
    <citation type="journal article" date="2011" name="Mol. Plant">
        <title>Single molecule analysis of the Arabidopsis FRA1 kinesin shows that it is a functional motor protein with unusually high processivity.</title>
        <authorList>
            <person name="Zhu C."/>
            <person name="Dixit R."/>
        </authorList>
    </citation>
    <scope>FUNCTION</scope>
    <scope>SUBUNIT</scope>
    <scope>DOMAIN</scope>
</reference>
<reference key="8">
    <citation type="journal article" date="2012" name="Protoplasma">
        <title>Functions of the Arabidopsis kinesin superfamily of microtubule-based motor proteins.</title>
        <authorList>
            <person name="Zhu C."/>
            <person name="Dixit R."/>
        </authorList>
    </citation>
    <scope>REVIEW</scope>
</reference>
<reference key="9">
    <citation type="journal article" date="2015" name="Mol. Plant">
        <title>Kinesin-4 functions in vesicular transport on cortical microtubules and regulates cell wall mechanics during cell elongation in plants.</title>
        <authorList>
            <person name="Kong Z."/>
            <person name="Ioki M."/>
            <person name="Braybrook S."/>
            <person name="Li S."/>
            <person name="Ye Z.H."/>
            <person name="Julie Lee Y.R."/>
            <person name="Hotta T."/>
            <person name="Chang A."/>
            <person name="Tian J."/>
            <person name="Wang G."/>
            <person name="Liu B."/>
        </authorList>
    </citation>
    <scope>FUNCTION</scope>
    <scope>DISRUPTION PHENOTYPE</scope>
</reference>
<reference key="10">
    <citation type="journal article" date="2015" name="Plant Physiol.">
        <title>The fragile Fiber1 kinesin contributes to cortical microtubule-mediated trafficking of cell wall components.</title>
        <authorList>
            <person name="Zhu C."/>
            <person name="Ganguly A."/>
            <person name="Baskin T.I."/>
            <person name="McClosky D.D."/>
            <person name="Anderson C.T."/>
            <person name="Foster C."/>
            <person name="Meunier K.A."/>
            <person name="Okamoto R."/>
            <person name="Berg H."/>
            <person name="Dixit R."/>
        </authorList>
    </citation>
    <scope>DISRUPTION PHENOTYPE</scope>
    <scope>FUNCTION</scope>
    <scope>SUBCELLULAR LOCATION</scope>
</reference>
<accession>Q8GS71</accession>
<accession>Q9FIJ9</accession>
<gene>
    <name evidence="12" type="primary">KIN4A</name>
    <name evidence="16" type="synonym">FRA1</name>
    <name evidence="15" type="ordered locus">At5g47820</name>
    <name evidence="17" type="ORF">MCA23.16</name>
</gene>
<proteinExistence type="evidence at protein level"/>
<protein>
    <recommendedName>
        <fullName evidence="12">Kinesin-like protein KIN-4A</fullName>
    </recommendedName>
    <alternativeName>
        <fullName evidence="11">AtKINESIN-4A</fullName>
    </alternativeName>
    <alternativeName>
        <fullName evidence="9">Protein FRAGILE FIBER 1</fullName>
    </alternativeName>
</protein>
<feature type="chain" id="PRO_0000431962" description="Kinesin-like protein KIN-4A">
    <location>
        <begin position="1"/>
        <end position="1035"/>
    </location>
</feature>
<feature type="domain" description="Kinesin motor" evidence="2">
    <location>
        <begin position="11"/>
        <end position="370"/>
    </location>
</feature>
<feature type="region of interest" description="Disordered" evidence="3">
    <location>
        <begin position="704"/>
        <end position="724"/>
    </location>
</feature>
<feature type="coiled-coil region" evidence="1">
    <location>
        <begin position="408"/>
        <end position="436"/>
    </location>
</feature>
<feature type="coiled-coil region" evidence="1">
    <location>
        <begin position="504"/>
        <end position="707"/>
    </location>
</feature>
<feature type="coiled-coil region" evidence="1">
    <location>
        <begin position="881"/>
        <end position="911"/>
    </location>
</feature>
<feature type="binding site" evidence="2">
    <location>
        <begin position="90"/>
        <end position="97"/>
    </location>
    <ligand>
        <name>ATP</name>
        <dbReference type="ChEBI" id="CHEBI:30616"/>
    </ligand>
</feature>
<keyword id="KW-0067">ATP-binding</keyword>
<keyword id="KW-0961">Cell wall biogenesis/degradation</keyword>
<keyword id="KW-0175">Coiled coil</keyword>
<keyword id="KW-0963">Cytoplasm</keyword>
<keyword id="KW-0206">Cytoskeleton</keyword>
<keyword id="KW-0493">Microtubule</keyword>
<keyword id="KW-0505">Motor protein</keyword>
<keyword id="KW-0547">Nucleotide-binding</keyword>
<keyword id="KW-1185">Reference proteome</keyword>
<keyword id="KW-0813">Transport</keyword>
<name>KN4A_ARATH</name>
<comment type="function">
    <text evidence="4 5 6 7 8">Kinesin-like motor protein involved in the control of the oriented deposition of cellulose microfibrils (PubMed:12468730, Ref.6). Its motor activity is directed toward the microtubule's plus end. It possesses the potential to drive long-distance transport of cargo along cortical microtubules (PubMed:21914648, PubMed:25646318). Regulates cell wall mechanics during cell elongation, by the regulation of primary and secondary walls deposition (PubMed:25600279, PubMed:25646318, Ref.6). Contributes to cortical microtubule-mediated trafficking of cell wall components (PubMed:25646318).</text>
</comment>
<comment type="subunit">
    <text evidence="5">Homodimer.</text>
</comment>
<comment type="subcellular location">
    <subcellularLocation>
        <location evidence="7">Cytoplasm</location>
    </subcellularLocation>
    <subcellularLocation>
        <location evidence="13">Cytoplasm</location>
        <location evidence="13">Cytoskeleton</location>
    </subcellularLocation>
    <text evidence="4">Concentrated around the periphery of the cytoplasm.</text>
</comment>
<comment type="tissue specificity">
    <text evidence="4 8">Expressed in stems and flowers (PubMed:12468730). Detected in cells undergoing secondary wall deposition including developing interfascicular fibers and xylem cells, but also in dividing cells and expanding/elongating parenchyma cells (Ref.6).</text>
</comment>
<comment type="domain">
    <text evidence="14">Composed of an N-terminal domain which is responsible for the motor activity of kinesin (it hydrolyzes ATP and binds microtubule) and a central to C-terminal alpha-helical coiled coil domain that mediates the heavy chain dimerization.</text>
</comment>
<comment type="disruption phenotype">
    <text evidence="4 6 7">Reduced length of roots and inflorescence stems. Altered orientation of cellulose microfibrils in fiber walls leading to dramatic reduction in fiber mechanical strength. No apparent alteration in cell wall composition. Lower expansion rate of the inflorescence stem along with the reduced thickness of both primary and secondary cell walls leading to mechanically weaker stems (PubMed:25646318).</text>
</comment>
<comment type="miscellaneous">
    <text evidence="8">Overexpression of KIN4A/FRA1 caused a severe reduction in the thickness of secondary walls in interfascicular fibers and deformation of vessels, an increase in the number of secondary wall layers, which are accompanied with a marked decrease in stem strength.</text>
</comment>
<comment type="similarity">
    <text evidence="10">Belongs to the TRAFAC class myosin-kinesin ATPase superfamily. Kinesin family. KIN-4 subfamily.</text>
</comment>
<comment type="sequence caution" evidence="12">
    <conflict type="erroneous gene model prediction">
        <sequence resource="EMBL-CDS" id="BAB11329"/>
    </conflict>
</comment>
<sequence>MESTPPPDDCSVKVAVHIRPLIGDERIQGCQDCVTVVTGKPQVQIGSHSFTFDHVYGSSGSPSTEMYEECAAPLVDGLFQGYNATVLAYGQTGSGKTYTMGTGCGDSSQTGIIPQVMNALFTKIETLKQQIEFQIHVSFIEIHKEEVQDLLDPCTVNKSDTNNTGHVGKVAHVPGKPPIQIRETSNGVITLAGSTEVSVSTLKEMAACLDQGSVSRATGSTNMNNQSSRSHAIFTITVEQMRKINTDSPENGAYNGSLKEEYLCAKLHLVDLAGSERAKRTGSDGLRFKEGVHINKGLLALGNVISALGDEKKRKDGAHVPYRDSKLTRLLQDSLGGNSRTVMIACISPADINAEETLNTLKYANRARNIRNKPVVNRDPVSSEMLKMRQQVEYLQAELSLRTGGSSCAEVQALKERIVWLETANEELCRELHEYRSRCPGVEHSEKDFKDIRADDIVGSVRPDGLKRSLHSIESSNYPMVEATTGDSREIDEEAKEWEHKLLQNSMDKELYELNRRLEEKESEMKLFDGYDPAALKQHFGKKIAEVEDEKRSVQEERNRLLAEIENLASDGQAQKLQDVHAQNLKALEAQILDLKKKQESQVQLLKQKQKSDDAARRLQDEIQSIKAQKVQLQHRMKQEAEQFRQWKASREKELLQLRKEGRKSEYERHKLQALNQRQKMVLQRKTEEAAMATKRLKELLEARKSSPREHSAGTNGFGTNGQTNEKSLQRWLDHELEVMVNVHEVRHEYEKQSHVRAALAEELAVLRQVDEFAVKGLSPPRGKNGFARASSLSPNARMARISSLENMLVISSNSLVAMASQLSEAEERERAFTNRGRWNQLRSMGEAKNLLQYMFNSLAETRCQLWEKDVEIKEMKDQFKEIVGLLRQSELRRKEAEKELKLREQAIATSLGTPPSSVKHVAEDLSTPSPMTVPAQKQLKFTPGIANGKVRGPAAFLDTNKKMVPMGQVSMRKLSAVGKQGGRLWRWKRSHHQWIVQFKWKWQKPWRLSEWIRTSDETLLKSKPRLKALPNKIM</sequence>
<organism>
    <name type="scientific">Arabidopsis thaliana</name>
    <name type="common">Mouse-ear cress</name>
    <dbReference type="NCBI Taxonomy" id="3702"/>
    <lineage>
        <taxon>Eukaryota</taxon>
        <taxon>Viridiplantae</taxon>
        <taxon>Streptophyta</taxon>
        <taxon>Embryophyta</taxon>
        <taxon>Tracheophyta</taxon>
        <taxon>Spermatophyta</taxon>
        <taxon>Magnoliopsida</taxon>
        <taxon>eudicotyledons</taxon>
        <taxon>Gunneridae</taxon>
        <taxon>Pentapetalae</taxon>
        <taxon>rosids</taxon>
        <taxon>malvids</taxon>
        <taxon>Brassicales</taxon>
        <taxon>Brassicaceae</taxon>
        <taxon>Camelineae</taxon>
        <taxon>Arabidopsis</taxon>
    </lineage>
</organism>
<dbReference type="EMBL" id="AY158083">
    <property type="protein sequence ID" value="AAN86114.1"/>
    <property type="molecule type" value="mRNA"/>
</dbReference>
<dbReference type="EMBL" id="AY158084">
    <property type="protein sequence ID" value="AAN86115.1"/>
    <property type="molecule type" value="Genomic_DNA"/>
</dbReference>
<dbReference type="EMBL" id="AB016886">
    <property type="protein sequence ID" value="BAB11329.1"/>
    <property type="status" value="ALT_SEQ"/>
    <property type="molecule type" value="Genomic_DNA"/>
</dbReference>
<dbReference type="EMBL" id="CP002688">
    <property type="protein sequence ID" value="AED95575.1"/>
    <property type="molecule type" value="Genomic_DNA"/>
</dbReference>
<dbReference type="EMBL" id="CP002688">
    <property type="protein sequence ID" value="AED95576.1"/>
    <property type="molecule type" value="Genomic_DNA"/>
</dbReference>
<dbReference type="RefSeq" id="NP_199593.2">
    <property type="nucleotide sequence ID" value="NM_124156.5"/>
</dbReference>
<dbReference type="RefSeq" id="NP_851151.1">
    <property type="nucleotide sequence ID" value="NM_180820.2"/>
</dbReference>
<dbReference type="SMR" id="Q8GS71"/>
<dbReference type="FunCoup" id="Q8GS71">
    <property type="interactions" value="2551"/>
</dbReference>
<dbReference type="STRING" id="3702.Q8GS71"/>
<dbReference type="iPTMnet" id="Q8GS71"/>
<dbReference type="PaxDb" id="3702-AT5G47820.2"/>
<dbReference type="ProteomicsDB" id="250746"/>
<dbReference type="EnsemblPlants" id="AT5G47820.1">
    <property type="protein sequence ID" value="AT5G47820.1"/>
    <property type="gene ID" value="AT5G47820"/>
</dbReference>
<dbReference type="EnsemblPlants" id="AT5G47820.2">
    <property type="protein sequence ID" value="AT5G47820.2"/>
    <property type="gene ID" value="AT5G47820"/>
</dbReference>
<dbReference type="GeneID" id="834833"/>
<dbReference type="Gramene" id="AT5G47820.1">
    <property type="protein sequence ID" value="AT5G47820.1"/>
    <property type="gene ID" value="AT5G47820"/>
</dbReference>
<dbReference type="Gramene" id="AT5G47820.2">
    <property type="protein sequence ID" value="AT5G47820.2"/>
    <property type="gene ID" value="AT5G47820"/>
</dbReference>
<dbReference type="KEGG" id="ath:AT5G47820"/>
<dbReference type="Araport" id="AT5G47820"/>
<dbReference type="TAIR" id="AT5G47820">
    <property type="gene designation" value="FRA1"/>
</dbReference>
<dbReference type="eggNOG" id="KOG0244">
    <property type="taxonomic scope" value="Eukaryota"/>
</dbReference>
<dbReference type="HOGENOM" id="CLU_001485_4_2_1"/>
<dbReference type="InParanoid" id="Q8GS71"/>
<dbReference type="OMA" id="DAFTTHH"/>
<dbReference type="OrthoDB" id="3176171at2759"/>
<dbReference type="PhylomeDB" id="Q8GS71"/>
<dbReference type="PRO" id="PR:Q8GS71"/>
<dbReference type="Proteomes" id="UP000006548">
    <property type="component" value="Chromosome 5"/>
</dbReference>
<dbReference type="ExpressionAtlas" id="Q8GS71">
    <property type="expression patterns" value="baseline and differential"/>
</dbReference>
<dbReference type="GO" id="GO:0055028">
    <property type="term" value="C:cortical microtubule"/>
    <property type="evidence" value="ECO:0000314"/>
    <property type="project" value="TAIR"/>
</dbReference>
<dbReference type="GO" id="GO:0005737">
    <property type="term" value="C:cytoplasm"/>
    <property type="evidence" value="ECO:0000314"/>
    <property type="project" value="TAIR"/>
</dbReference>
<dbReference type="GO" id="GO:0005524">
    <property type="term" value="F:ATP binding"/>
    <property type="evidence" value="ECO:0007669"/>
    <property type="project" value="UniProtKB-KW"/>
</dbReference>
<dbReference type="GO" id="GO:0008017">
    <property type="term" value="F:microtubule binding"/>
    <property type="evidence" value="ECO:0007669"/>
    <property type="project" value="InterPro"/>
</dbReference>
<dbReference type="GO" id="GO:0003777">
    <property type="term" value="F:microtubule motor activity"/>
    <property type="evidence" value="ECO:0000314"/>
    <property type="project" value="UniProtKB"/>
</dbReference>
<dbReference type="GO" id="GO:0008574">
    <property type="term" value="F:plus-end-directed microtubule motor activity"/>
    <property type="evidence" value="ECO:0000314"/>
    <property type="project" value="UniProtKB"/>
</dbReference>
<dbReference type="GO" id="GO:0010215">
    <property type="term" value="P:cellulose microfibril organization"/>
    <property type="evidence" value="ECO:0000315"/>
    <property type="project" value="TAIR"/>
</dbReference>
<dbReference type="GO" id="GO:0030705">
    <property type="term" value="P:cytoskeleton-dependent intracellular transport"/>
    <property type="evidence" value="ECO:0000314"/>
    <property type="project" value="UniProtKB"/>
</dbReference>
<dbReference type="GO" id="GO:0007018">
    <property type="term" value="P:microtubule-based movement"/>
    <property type="evidence" value="ECO:0007669"/>
    <property type="project" value="InterPro"/>
</dbReference>
<dbReference type="GO" id="GO:0009832">
    <property type="term" value="P:plant-type cell wall biogenesis"/>
    <property type="evidence" value="ECO:0000315"/>
    <property type="project" value="TAIR"/>
</dbReference>
<dbReference type="CDD" id="cd01372">
    <property type="entry name" value="KISc_KIF4"/>
    <property type="match status" value="1"/>
</dbReference>
<dbReference type="FunFam" id="3.40.850.10:FF:000032">
    <property type="entry name" value="kinesin-like protein KIN-4A isoform X1"/>
    <property type="match status" value="1"/>
</dbReference>
<dbReference type="Gene3D" id="3.40.850.10">
    <property type="entry name" value="Kinesin motor domain"/>
    <property type="match status" value="1"/>
</dbReference>
<dbReference type="InterPro" id="IPR027640">
    <property type="entry name" value="Kinesin-like_fam"/>
</dbReference>
<dbReference type="InterPro" id="IPR019821">
    <property type="entry name" value="Kinesin_motor_CS"/>
</dbReference>
<dbReference type="InterPro" id="IPR001752">
    <property type="entry name" value="Kinesin_motor_dom"/>
</dbReference>
<dbReference type="InterPro" id="IPR036961">
    <property type="entry name" value="Kinesin_motor_dom_sf"/>
</dbReference>
<dbReference type="InterPro" id="IPR027417">
    <property type="entry name" value="P-loop_NTPase"/>
</dbReference>
<dbReference type="PANTHER" id="PTHR47969">
    <property type="entry name" value="CHROMOSOME-ASSOCIATED KINESIN KIF4A-RELATED"/>
    <property type="match status" value="1"/>
</dbReference>
<dbReference type="PANTHER" id="PTHR47969:SF15">
    <property type="entry name" value="CHROMOSOME-ASSOCIATED KINESIN KIF4A-RELATED"/>
    <property type="match status" value="1"/>
</dbReference>
<dbReference type="Pfam" id="PF00225">
    <property type="entry name" value="Kinesin"/>
    <property type="match status" value="1"/>
</dbReference>
<dbReference type="PRINTS" id="PR00380">
    <property type="entry name" value="KINESINHEAVY"/>
</dbReference>
<dbReference type="SMART" id="SM00129">
    <property type="entry name" value="KISc"/>
    <property type="match status" value="1"/>
</dbReference>
<dbReference type="SUPFAM" id="SSF52540">
    <property type="entry name" value="P-loop containing nucleoside triphosphate hydrolases"/>
    <property type="match status" value="1"/>
</dbReference>
<dbReference type="PROSITE" id="PS00411">
    <property type="entry name" value="KINESIN_MOTOR_1"/>
    <property type="match status" value="1"/>
</dbReference>
<dbReference type="PROSITE" id="PS50067">
    <property type="entry name" value="KINESIN_MOTOR_2"/>
    <property type="match status" value="1"/>
</dbReference>